<proteinExistence type="inferred from homology"/>
<gene>
    <name evidence="1" type="primary">hslO</name>
    <name type="ordered locus">SH2498</name>
</gene>
<protein>
    <recommendedName>
        <fullName evidence="1">33 kDa chaperonin</fullName>
    </recommendedName>
    <alternativeName>
        <fullName evidence="1">Heat shock protein 33 homolog</fullName>
        <shortName evidence="1">HSP33</shortName>
    </alternativeName>
</protein>
<feature type="chain" id="PRO_0000238095" description="33 kDa chaperonin">
    <location>
        <begin position="1"/>
        <end position="294"/>
    </location>
</feature>
<feature type="disulfide bond" description="Redox-active" evidence="1">
    <location>
        <begin position="238"/>
        <end position="240"/>
    </location>
</feature>
<feature type="disulfide bond" description="Redox-active" evidence="1">
    <location>
        <begin position="271"/>
        <end position="274"/>
    </location>
</feature>
<dbReference type="EMBL" id="AP006716">
    <property type="protein sequence ID" value="BAE05807.1"/>
    <property type="molecule type" value="Genomic_DNA"/>
</dbReference>
<dbReference type="RefSeq" id="WP_011276749.1">
    <property type="nucleotide sequence ID" value="NC_007168.1"/>
</dbReference>
<dbReference type="SMR" id="Q4L3H0"/>
<dbReference type="GeneID" id="93781728"/>
<dbReference type="KEGG" id="sha:SH2498"/>
<dbReference type="eggNOG" id="COG1281">
    <property type="taxonomic scope" value="Bacteria"/>
</dbReference>
<dbReference type="HOGENOM" id="CLU_054493_1_0_9"/>
<dbReference type="OrthoDB" id="9776534at2"/>
<dbReference type="Proteomes" id="UP000000543">
    <property type="component" value="Chromosome"/>
</dbReference>
<dbReference type="GO" id="GO:0005737">
    <property type="term" value="C:cytoplasm"/>
    <property type="evidence" value="ECO:0007669"/>
    <property type="project" value="UniProtKB-SubCell"/>
</dbReference>
<dbReference type="GO" id="GO:0044183">
    <property type="term" value="F:protein folding chaperone"/>
    <property type="evidence" value="ECO:0007669"/>
    <property type="project" value="TreeGrafter"/>
</dbReference>
<dbReference type="GO" id="GO:0051082">
    <property type="term" value="F:unfolded protein binding"/>
    <property type="evidence" value="ECO:0007669"/>
    <property type="project" value="UniProtKB-UniRule"/>
</dbReference>
<dbReference type="GO" id="GO:0042026">
    <property type="term" value="P:protein refolding"/>
    <property type="evidence" value="ECO:0007669"/>
    <property type="project" value="TreeGrafter"/>
</dbReference>
<dbReference type="CDD" id="cd00498">
    <property type="entry name" value="Hsp33"/>
    <property type="match status" value="1"/>
</dbReference>
<dbReference type="Gene3D" id="3.55.30.10">
    <property type="entry name" value="Hsp33 domain"/>
    <property type="match status" value="1"/>
</dbReference>
<dbReference type="Gene3D" id="3.90.1280.10">
    <property type="entry name" value="HSP33 redox switch-like"/>
    <property type="match status" value="1"/>
</dbReference>
<dbReference type="HAMAP" id="MF_00117">
    <property type="entry name" value="HslO"/>
    <property type="match status" value="1"/>
</dbReference>
<dbReference type="InterPro" id="IPR000397">
    <property type="entry name" value="Heat_shock_Hsp33"/>
</dbReference>
<dbReference type="InterPro" id="IPR016154">
    <property type="entry name" value="Heat_shock_Hsp33_C"/>
</dbReference>
<dbReference type="InterPro" id="IPR016153">
    <property type="entry name" value="Heat_shock_Hsp33_N"/>
</dbReference>
<dbReference type="NCBIfam" id="NF001033">
    <property type="entry name" value="PRK00114.1"/>
    <property type="match status" value="1"/>
</dbReference>
<dbReference type="PANTHER" id="PTHR30111">
    <property type="entry name" value="33 KDA CHAPERONIN"/>
    <property type="match status" value="1"/>
</dbReference>
<dbReference type="PANTHER" id="PTHR30111:SF1">
    <property type="entry name" value="33 KDA CHAPERONIN"/>
    <property type="match status" value="1"/>
</dbReference>
<dbReference type="Pfam" id="PF01430">
    <property type="entry name" value="HSP33"/>
    <property type="match status" value="1"/>
</dbReference>
<dbReference type="PIRSF" id="PIRSF005261">
    <property type="entry name" value="Heat_shock_Hsp33"/>
    <property type="match status" value="1"/>
</dbReference>
<dbReference type="SUPFAM" id="SSF64397">
    <property type="entry name" value="Hsp33 domain"/>
    <property type="match status" value="1"/>
</dbReference>
<dbReference type="SUPFAM" id="SSF118352">
    <property type="entry name" value="HSP33 redox switch-like"/>
    <property type="match status" value="1"/>
</dbReference>
<name>HSLO_STAHJ</name>
<sequence>MTHDYIVKSLAFDGEIRAYAALTTESVQEAQTRHYTWPTASAAMGRTMTATLLMGSMLKGEQKLTVTVDGKGPIGRIIADADAEGNVRAYVDKPQTHFPLNEQGKLDVRRAVGTDGSIQVVKDVGMKDYFSGASPIVSGELGEDFTYYFATSEQTPSSVGLGVLVNPDNSIKAAGGFIIQVMPGAKDETVTKLENAINNMQPVSKLIEQGLTPEGILNEILGEDNVQILETMQAQFECNCSHEKFLNAIKGLGEAEIQDMIKEDHGAEAICHFCGNKYNYSEAELEDLLASMNA</sequence>
<accession>Q4L3H0</accession>
<organism>
    <name type="scientific">Staphylococcus haemolyticus (strain JCSC1435)</name>
    <dbReference type="NCBI Taxonomy" id="279808"/>
    <lineage>
        <taxon>Bacteria</taxon>
        <taxon>Bacillati</taxon>
        <taxon>Bacillota</taxon>
        <taxon>Bacilli</taxon>
        <taxon>Bacillales</taxon>
        <taxon>Staphylococcaceae</taxon>
        <taxon>Staphylococcus</taxon>
    </lineage>
</organism>
<evidence type="ECO:0000255" key="1">
    <source>
        <dbReference type="HAMAP-Rule" id="MF_00117"/>
    </source>
</evidence>
<keyword id="KW-0143">Chaperone</keyword>
<keyword id="KW-0963">Cytoplasm</keyword>
<keyword id="KW-1015">Disulfide bond</keyword>
<keyword id="KW-0676">Redox-active center</keyword>
<keyword id="KW-0862">Zinc</keyword>
<reference key="1">
    <citation type="journal article" date="2005" name="J. Bacteriol.">
        <title>Whole-genome sequencing of Staphylococcus haemolyticus uncovers the extreme plasticity of its genome and the evolution of human-colonizing staphylococcal species.</title>
        <authorList>
            <person name="Takeuchi F."/>
            <person name="Watanabe S."/>
            <person name="Baba T."/>
            <person name="Yuzawa H."/>
            <person name="Ito T."/>
            <person name="Morimoto Y."/>
            <person name="Kuroda M."/>
            <person name="Cui L."/>
            <person name="Takahashi M."/>
            <person name="Ankai A."/>
            <person name="Baba S."/>
            <person name="Fukui S."/>
            <person name="Lee J.C."/>
            <person name="Hiramatsu K."/>
        </authorList>
    </citation>
    <scope>NUCLEOTIDE SEQUENCE [LARGE SCALE GENOMIC DNA]</scope>
    <source>
        <strain>JCSC1435</strain>
    </source>
</reference>
<comment type="function">
    <text evidence="1">Redox regulated molecular chaperone. Protects both thermally unfolding and oxidatively damaged proteins from irreversible aggregation. Plays an important role in the bacterial defense system toward oxidative stress.</text>
</comment>
<comment type="subcellular location">
    <subcellularLocation>
        <location evidence="1">Cytoplasm</location>
    </subcellularLocation>
</comment>
<comment type="PTM">
    <text evidence="1">Under oxidizing conditions two disulfide bonds are formed involving the reactive cysteines. Under reducing conditions zinc is bound to the reactive cysteines and the protein is inactive.</text>
</comment>
<comment type="similarity">
    <text evidence="1">Belongs to the HSP33 family.</text>
</comment>